<feature type="chain" id="PRO_0000218305" description="Programmed cell death protein 2">
    <location>
        <begin position="1"/>
        <end position="343"/>
    </location>
</feature>
<feature type="zinc finger region" description="MYND-type; atypical" evidence="2">
    <location>
        <begin position="134"/>
        <end position="171"/>
    </location>
</feature>
<feature type="binding site" evidence="2">
    <location>
        <position position="134"/>
    </location>
    <ligand>
        <name>Zn(2+)</name>
        <dbReference type="ChEBI" id="CHEBI:29105"/>
        <label>1</label>
    </ligand>
</feature>
<feature type="binding site" evidence="2">
    <location>
        <position position="137"/>
    </location>
    <ligand>
        <name>Zn(2+)</name>
        <dbReference type="ChEBI" id="CHEBI:29105"/>
        <label>1</label>
    </ligand>
</feature>
<feature type="binding site" evidence="2">
    <location>
        <position position="145"/>
    </location>
    <ligand>
        <name>Zn(2+)</name>
        <dbReference type="ChEBI" id="CHEBI:29105"/>
        <label>2</label>
    </ligand>
</feature>
<feature type="binding site" evidence="2">
    <location>
        <position position="148"/>
    </location>
    <ligand>
        <name>Zn(2+)</name>
        <dbReference type="ChEBI" id="CHEBI:29105"/>
        <label>2</label>
    </ligand>
</feature>
<feature type="binding site" evidence="2">
    <location>
        <position position="154"/>
    </location>
    <ligand>
        <name>Zn(2+)</name>
        <dbReference type="ChEBI" id="CHEBI:29105"/>
        <label>1</label>
    </ligand>
</feature>
<feature type="binding site" evidence="2">
    <location>
        <position position="158"/>
    </location>
    <ligand>
        <name>Zn(2+)</name>
        <dbReference type="ChEBI" id="CHEBI:29105"/>
        <label>1</label>
    </ligand>
</feature>
<feature type="binding site" evidence="2">
    <location>
        <position position="167"/>
    </location>
    <ligand>
        <name>Zn(2+)</name>
        <dbReference type="ChEBI" id="CHEBI:29105"/>
        <label>2</label>
    </ligand>
</feature>
<feature type="binding site" evidence="2">
    <location>
        <position position="171"/>
    </location>
    <ligand>
        <name>Zn(2+)</name>
        <dbReference type="ChEBI" id="CHEBI:29105"/>
        <label>2</label>
    </ligand>
</feature>
<feature type="sequence conflict" description="In Ref. 2; BAC32560." evidence="3" ref="2">
    <original>L</original>
    <variation>P</variation>
    <location>
        <position position="88"/>
    </location>
</feature>
<feature type="sequence conflict" description="In Ref. 1; AAA83433." evidence="3" ref="1">
    <original>A</original>
    <variation>P</variation>
    <location>
        <position position="248"/>
    </location>
</feature>
<proteinExistence type="evidence at transcript level"/>
<evidence type="ECO:0000250" key="1"/>
<evidence type="ECO:0000255" key="2">
    <source>
        <dbReference type="PROSITE-ProRule" id="PRU00134"/>
    </source>
</evidence>
<evidence type="ECO:0000305" key="3"/>
<sequence length="343" mass="38342">MAAAAPGPVELGFAEEAPAWRLRSEQFPSKVGGRPAWLGLAELPGPGALACARCGRPLAFLLQVYAPLPGRDDAFHRSLFLFCCREPLCCAGLRVFRNQLPRNNAFYSYEPPSETEALGTECVCLQLKSGAHLCRVCGCLAPMTCSRCKQAHYCSKEHQTLDWRLGHKQACTQSDKIDHMVPDHNFLFPEFEIVTETEDEILPEVVEMEDYSEVTGSMGGIPEEELDSMAKHESKEDHIFQKFKSKIALEPEQILRYGRGIKPIWISGENIPQEKDIPDCPCGAKRIFEFQVMPQLLNHLKADRLGRSIDWGVLAVFTCAESCSLGSGYTEEFVWKQDVTDTP</sequence>
<name>PDCD2_MOUSE</name>
<dbReference type="EMBL" id="U10903">
    <property type="protein sequence ID" value="AAA83433.1"/>
    <property type="molecule type" value="mRNA"/>
</dbReference>
<dbReference type="EMBL" id="AK045985">
    <property type="protein sequence ID" value="BAC32560.1"/>
    <property type="molecule type" value="mRNA"/>
</dbReference>
<dbReference type="CCDS" id="CCDS28413.1"/>
<dbReference type="PIR" id="I49067">
    <property type="entry name" value="I49067"/>
</dbReference>
<dbReference type="RefSeq" id="NP_032825.2">
    <property type="nucleotide sequence ID" value="NM_008799.2"/>
</dbReference>
<dbReference type="FunCoup" id="P46718">
    <property type="interactions" value="3357"/>
</dbReference>
<dbReference type="IntAct" id="P46718">
    <property type="interactions" value="1"/>
</dbReference>
<dbReference type="STRING" id="10090.ENSMUSP00000052523"/>
<dbReference type="PhosphoSitePlus" id="P46718"/>
<dbReference type="SwissPalm" id="P46718"/>
<dbReference type="PaxDb" id="10090-ENSMUSP00000052523"/>
<dbReference type="PeptideAtlas" id="P46718"/>
<dbReference type="ProteomicsDB" id="287900"/>
<dbReference type="Pumba" id="P46718"/>
<dbReference type="DNASU" id="18567"/>
<dbReference type="GeneID" id="18567"/>
<dbReference type="KEGG" id="mmu:18567"/>
<dbReference type="UCSC" id="uc008aoq.1">
    <property type="organism name" value="mouse"/>
</dbReference>
<dbReference type="AGR" id="MGI:104643"/>
<dbReference type="CTD" id="5134"/>
<dbReference type="MGI" id="MGI:104643">
    <property type="gene designation" value="Pdcd2"/>
</dbReference>
<dbReference type="eggNOG" id="KOG2061">
    <property type="taxonomic scope" value="Eukaryota"/>
</dbReference>
<dbReference type="InParanoid" id="P46718"/>
<dbReference type="OrthoDB" id="443682at2759"/>
<dbReference type="PhylomeDB" id="P46718"/>
<dbReference type="TreeFam" id="TF313722"/>
<dbReference type="BioGRID-ORCS" id="18567">
    <property type="hits" value="14 hits in 49 CRISPR screens"/>
</dbReference>
<dbReference type="ChiTaRS" id="Pdcd2">
    <property type="organism name" value="mouse"/>
</dbReference>
<dbReference type="PRO" id="PR:P46718"/>
<dbReference type="Proteomes" id="UP000000589">
    <property type="component" value="Unplaced"/>
</dbReference>
<dbReference type="RNAct" id="P46718">
    <property type="molecule type" value="protein"/>
</dbReference>
<dbReference type="GO" id="GO:0005737">
    <property type="term" value="C:cytoplasm"/>
    <property type="evidence" value="ECO:0007669"/>
    <property type="project" value="InterPro"/>
</dbReference>
<dbReference type="GO" id="GO:0005634">
    <property type="term" value="C:nucleus"/>
    <property type="evidence" value="ECO:0007669"/>
    <property type="project" value="UniProtKB-SubCell"/>
</dbReference>
<dbReference type="GO" id="GO:0003677">
    <property type="term" value="F:DNA binding"/>
    <property type="evidence" value="ECO:0007669"/>
    <property type="project" value="UniProtKB-KW"/>
</dbReference>
<dbReference type="GO" id="GO:0008270">
    <property type="term" value="F:zinc ion binding"/>
    <property type="evidence" value="ECO:0007669"/>
    <property type="project" value="UniProtKB-KW"/>
</dbReference>
<dbReference type="GO" id="GO:0006915">
    <property type="term" value="P:apoptotic process"/>
    <property type="evidence" value="ECO:0007669"/>
    <property type="project" value="UniProtKB-KW"/>
</dbReference>
<dbReference type="FunFam" id="6.10.140.2220:FF:000014">
    <property type="entry name" value="Programmed cell death 2"/>
    <property type="match status" value="1"/>
</dbReference>
<dbReference type="Gene3D" id="6.10.140.2220">
    <property type="match status" value="1"/>
</dbReference>
<dbReference type="InterPro" id="IPR007320">
    <property type="entry name" value="PDCD2_C"/>
</dbReference>
<dbReference type="InterPro" id="IPR002893">
    <property type="entry name" value="Znf_MYND"/>
</dbReference>
<dbReference type="PANTHER" id="PTHR12298">
    <property type="entry name" value="PCDC2 PROGRAMMED CELL DEATH PROTEIN 2 -RELATED"/>
    <property type="match status" value="1"/>
</dbReference>
<dbReference type="PANTHER" id="PTHR12298:SF4">
    <property type="entry name" value="PROGRAMMED CELL DEATH PROTEIN 2"/>
    <property type="match status" value="1"/>
</dbReference>
<dbReference type="Pfam" id="PF04194">
    <property type="entry name" value="PDCD2_C"/>
    <property type="match status" value="1"/>
</dbReference>
<dbReference type="Pfam" id="PF01753">
    <property type="entry name" value="zf-MYND"/>
    <property type="match status" value="1"/>
</dbReference>
<dbReference type="SUPFAM" id="SSF144232">
    <property type="entry name" value="HIT/MYND zinc finger-like"/>
    <property type="match status" value="1"/>
</dbReference>
<dbReference type="PROSITE" id="PS01360">
    <property type="entry name" value="ZF_MYND_1"/>
    <property type="match status" value="1"/>
</dbReference>
<dbReference type="PROSITE" id="PS50865">
    <property type="entry name" value="ZF_MYND_2"/>
    <property type="match status" value="1"/>
</dbReference>
<protein>
    <recommendedName>
        <fullName>Programmed cell death protein 2</fullName>
    </recommendedName>
    <alternativeName>
        <fullName>Zinc finger protein Rp-8</fullName>
    </alternativeName>
</protein>
<accession>P46718</accession>
<accession>Q8BR06</accession>
<organism>
    <name type="scientific">Mus musculus</name>
    <name type="common">Mouse</name>
    <dbReference type="NCBI Taxonomy" id="10090"/>
    <lineage>
        <taxon>Eukaryota</taxon>
        <taxon>Metazoa</taxon>
        <taxon>Chordata</taxon>
        <taxon>Craniata</taxon>
        <taxon>Vertebrata</taxon>
        <taxon>Euteleostomi</taxon>
        <taxon>Mammalia</taxon>
        <taxon>Eutheria</taxon>
        <taxon>Euarchontoglires</taxon>
        <taxon>Glires</taxon>
        <taxon>Rodentia</taxon>
        <taxon>Myomorpha</taxon>
        <taxon>Muroidea</taxon>
        <taxon>Muridae</taxon>
        <taxon>Murinae</taxon>
        <taxon>Mus</taxon>
        <taxon>Mus</taxon>
    </lineage>
</organism>
<gene>
    <name type="primary">Pdcd2</name>
    <name type="synonym">Rp8</name>
</gene>
<reference key="1">
    <citation type="journal article" date="1995" name="DNA Cell Biol.">
        <title>Cloning of mouse RP-8 cDNA and its expression during apoptosis of lymphoid and myeloid cells.</title>
        <authorList>
            <person name="Vaux D.L."/>
            <person name="Haecker G."/>
        </authorList>
    </citation>
    <scope>NUCLEOTIDE SEQUENCE [MRNA]</scope>
    <source>
        <strain>BALB/cJ</strain>
        <tissue>Thymus</tissue>
    </source>
</reference>
<reference key="2">
    <citation type="journal article" date="2005" name="Science">
        <title>The transcriptional landscape of the mammalian genome.</title>
        <authorList>
            <person name="Carninci P."/>
            <person name="Kasukawa T."/>
            <person name="Katayama S."/>
            <person name="Gough J."/>
            <person name="Frith M.C."/>
            <person name="Maeda N."/>
            <person name="Oyama R."/>
            <person name="Ravasi T."/>
            <person name="Lenhard B."/>
            <person name="Wells C."/>
            <person name="Kodzius R."/>
            <person name="Shimokawa K."/>
            <person name="Bajic V.B."/>
            <person name="Brenner S.E."/>
            <person name="Batalov S."/>
            <person name="Forrest A.R."/>
            <person name="Zavolan M."/>
            <person name="Davis M.J."/>
            <person name="Wilming L.G."/>
            <person name="Aidinis V."/>
            <person name="Allen J.E."/>
            <person name="Ambesi-Impiombato A."/>
            <person name="Apweiler R."/>
            <person name="Aturaliya R.N."/>
            <person name="Bailey T.L."/>
            <person name="Bansal M."/>
            <person name="Baxter L."/>
            <person name="Beisel K.W."/>
            <person name="Bersano T."/>
            <person name="Bono H."/>
            <person name="Chalk A.M."/>
            <person name="Chiu K.P."/>
            <person name="Choudhary V."/>
            <person name="Christoffels A."/>
            <person name="Clutterbuck D.R."/>
            <person name="Crowe M.L."/>
            <person name="Dalla E."/>
            <person name="Dalrymple B.P."/>
            <person name="de Bono B."/>
            <person name="Della Gatta G."/>
            <person name="di Bernardo D."/>
            <person name="Down T."/>
            <person name="Engstrom P."/>
            <person name="Fagiolini M."/>
            <person name="Faulkner G."/>
            <person name="Fletcher C.F."/>
            <person name="Fukushima T."/>
            <person name="Furuno M."/>
            <person name="Futaki S."/>
            <person name="Gariboldi M."/>
            <person name="Georgii-Hemming P."/>
            <person name="Gingeras T.R."/>
            <person name="Gojobori T."/>
            <person name="Green R.E."/>
            <person name="Gustincich S."/>
            <person name="Harbers M."/>
            <person name="Hayashi Y."/>
            <person name="Hensch T.K."/>
            <person name="Hirokawa N."/>
            <person name="Hill D."/>
            <person name="Huminiecki L."/>
            <person name="Iacono M."/>
            <person name="Ikeo K."/>
            <person name="Iwama A."/>
            <person name="Ishikawa T."/>
            <person name="Jakt M."/>
            <person name="Kanapin A."/>
            <person name="Katoh M."/>
            <person name="Kawasawa Y."/>
            <person name="Kelso J."/>
            <person name="Kitamura H."/>
            <person name="Kitano H."/>
            <person name="Kollias G."/>
            <person name="Krishnan S.P."/>
            <person name="Kruger A."/>
            <person name="Kummerfeld S.K."/>
            <person name="Kurochkin I.V."/>
            <person name="Lareau L.F."/>
            <person name="Lazarevic D."/>
            <person name="Lipovich L."/>
            <person name="Liu J."/>
            <person name="Liuni S."/>
            <person name="McWilliam S."/>
            <person name="Madan Babu M."/>
            <person name="Madera M."/>
            <person name="Marchionni L."/>
            <person name="Matsuda H."/>
            <person name="Matsuzawa S."/>
            <person name="Miki H."/>
            <person name="Mignone F."/>
            <person name="Miyake S."/>
            <person name="Morris K."/>
            <person name="Mottagui-Tabar S."/>
            <person name="Mulder N."/>
            <person name="Nakano N."/>
            <person name="Nakauchi H."/>
            <person name="Ng P."/>
            <person name="Nilsson R."/>
            <person name="Nishiguchi S."/>
            <person name="Nishikawa S."/>
            <person name="Nori F."/>
            <person name="Ohara O."/>
            <person name="Okazaki Y."/>
            <person name="Orlando V."/>
            <person name="Pang K.C."/>
            <person name="Pavan W.J."/>
            <person name="Pavesi G."/>
            <person name="Pesole G."/>
            <person name="Petrovsky N."/>
            <person name="Piazza S."/>
            <person name="Reed J."/>
            <person name="Reid J.F."/>
            <person name="Ring B.Z."/>
            <person name="Ringwald M."/>
            <person name="Rost B."/>
            <person name="Ruan Y."/>
            <person name="Salzberg S.L."/>
            <person name="Sandelin A."/>
            <person name="Schneider C."/>
            <person name="Schoenbach C."/>
            <person name="Sekiguchi K."/>
            <person name="Semple C.A."/>
            <person name="Seno S."/>
            <person name="Sessa L."/>
            <person name="Sheng Y."/>
            <person name="Shibata Y."/>
            <person name="Shimada H."/>
            <person name="Shimada K."/>
            <person name="Silva D."/>
            <person name="Sinclair B."/>
            <person name="Sperling S."/>
            <person name="Stupka E."/>
            <person name="Sugiura K."/>
            <person name="Sultana R."/>
            <person name="Takenaka Y."/>
            <person name="Taki K."/>
            <person name="Tammoja K."/>
            <person name="Tan S.L."/>
            <person name="Tang S."/>
            <person name="Taylor M.S."/>
            <person name="Tegner J."/>
            <person name="Teichmann S.A."/>
            <person name="Ueda H.R."/>
            <person name="van Nimwegen E."/>
            <person name="Verardo R."/>
            <person name="Wei C.L."/>
            <person name="Yagi K."/>
            <person name="Yamanishi H."/>
            <person name="Zabarovsky E."/>
            <person name="Zhu S."/>
            <person name="Zimmer A."/>
            <person name="Hide W."/>
            <person name="Bult C."/>
            <person name="Grimmond S.M."/>
            <person name="Teasdale R.D."/>
            <person name="Liu E.T."/>
            <person name="Brusic V."/>
            <person name="Quackenbush J."/>
            <person name="Wahlestedt C."/>
            <person name="Mattick J.S."/>
            <person name="Hume D.A."/>
            <person name="Kai C."/>
            <person name="Sasaki D."/>
            <person name="Tomaru Y."/>
            <person name="Fukuda S."/>
            <person name="Kanamori-Katayama M."/>
            <person name="Suzuki M."/>
            <person name="Aoki J."/>
            <person name="Arakawa T."/>
            <person name="Iida J."/>
            <person name="Imamura K."/>
            <person name="Itoh M."/>
            <person name="Kato T."/>
            <person name="Kawaji H."/>
            <person name="Kawagashira N."/>
            <person name="Kawashima T."/>
            <person name="Kojima M."/>
            <person name="Kondo S."/>
            <person name="Konno H."/>
            <person name="Nakano K."/>
            <person name="Ninomiya N."/>
            <person name="Nishio T."/>
            <person name="Okada M."/>
            <person name="Plessy C."/>
            <person name="Shibata K."/>
            <person name="Shiraki T."/>
            <person name="Suzuki S."/>
            <person name="Tagami M."/>
            <person name="Waki K."/>
            <person name="Watahiki A."/>
            <person name="Okamura-Oho Y."/>
            <person name="Suzuki H."/>
            <person name="Kawai J."/>
            <person name="Hayashizaki Y."/>
        </authorList>
    </citation>
    <scope>NUCLEOTIDE SEQUENCE [LARGE SCALE MRNA]</scope>
    <source>
        <strain>C57BL/6J</strain>
        <tissue>Brain</tissue>
    </source>
</reference>
<keyword id="KW-0053">Apoptosis</keyword>
<keyword id="KW-0238">DNA-binding</keyword>
<keyword id="KW-0479">Metal-binding</keyword>
<keyword id="KW-0539">Nucleus</keyword>
<keyword id="KW-1185">Reference proteome</keyword>
<keyword id="KW-0832">Ubl conjugation</keyword>
<keyword id="KW-0862">Zinc</keyword>
<keyword id="KW-0863">Zinc-finger</keyword>
<comment type="function">
    <text>May be a DNA-binding protein with a regulatory function. May play an important role in cell death and/or in regulation of cell proliferation.</text>
</comment>
<comment type="subcellular location">
    <subcellularLocation>
        <location evidence="3">Nucleus</location>
    </subcellularLocation>
</comment>
<comment type="developmental stage">
    <text>Expressed during apoptosis of lymphoid and myeloid cells.</text>
</comment>
<comment type="PTM">
    <text evidence="1">Ubiquitinated by PRKN, promoting proteasomal degradation.</text>
</comment>